<organism>
    <name type="scientific">Streptococcus pyogenes serotype M28 (strain MGAS6180)</name>
    <dbReference type="NCBI Taxonomy" id="319701"/>
    <lineage>
        <taxon>Bacteria</taxon>
        <taxon>Bacillati</taxon>
        <taxon>Bacillota</taxon>
        <taxon>Bacilli</taxon>
        <taxon>Lactobacillales</taxon>
        <taxon>Streptococcaceae</taxon>
        <taxon>Streptococcus</taxon>
    </lineage>
</organism>
<keyword id="KW-0067">ATP-binding</keyword>
<keyword id="KW-0319">Glycerol metabolism</keyword>
<keyword id="KW-0418">Kinase</keyword>
<keyword id="KW-0547">Nucleotide-binding</keyword>
<keyword id="KW-0597">Phosphoprotein</keyword>
<keyword id="KW-0808">Transferase</keyword>
<protein>
    <recommendedName>
        <fullName evidence="1">Glycerol kinase</fullName>
        <ecNumber evidence="1">2.7.1.30</ecNumber>
    </recommendedName>
    <alternativeName>
        <fullName evidence="1">ATP:glycerol 3-phosphotransferase</fullName>
    </alternativeName>
    <alternativeName>
        <fullName evidence="1">Glycerokinase</fullName>
        <shortName evidence="1">GK</shortName>
    </alternativeName>
</protein>
<gene>
    <name evidence="1" type="primary">glpK</name>
    <name type="ordered locus">M28_Spy1424</name>
</gene>
<comment type="function">
    <text evidence="1">Key enzyme in the regulation of glycerol uptake and metabolism. Catalyzes the phosphorylation of glycerol to yield sn-glycerol 3-phosphate.</text>
</comment>
<comment type="catalytic activity">
    <reaction evidence="1">
        <text>glycerol + ATP = sn-glycerol 3-phosphate + ADP + H(+)</text>
        <dbReference type="Rhea" id="RHEA:21644"/>
        <dbReference type="ChEBI" id="CHEBI:15378"/>
        <dbReference type="ChEBI" id="CHEBI:17754"/>
        <dbReference type="ChEBI" id="CHEBI:30616"/>
        <dbReference type="ChEBI" id="CHEBI:57597"/>
        <dbReference type="ChEBI" id="CHEBI:456216"/>
        <dbReference type="EC" id="2.7.1.30"/>
    </reaction>
</comment>
<comment type="activity regulation">
    <text evidence="1">Activated by phosphorylation and inhibited by fructose 1,6-bisphosphate (FBP).</text>
</comment>
<comment type="pathway">
    <text evidence="1">Polyol metabolism; glycerol degradation via glycerol kinase pathway; sn-glycerol 3-phosphate from glycerol: step 1/1.</text>
</comment>
<comment type="subunit">
    <text evidence="1">Homotetramer and homodimer (in equilibrium).</text>
</comment>
<comment type="PTM">
    <text evidence="1">The phosphoenolpyruvate-dependent sugar phosphotransferase system (PTS), including enzyme I, and histidine-containing protein (HPr) are required for the phosphorylation, which leads to the activation of the enzyme.</text>
</comment>
<comment type="similarity">
    <text evidence="1">Belongs to the FGGY kinase family.</text>
</comment>
<feature type="chain" id="PRO_1000020804" description="Glycerol kinase">
    <location>
        <begin position="1"/>
        <end position="508"/>
    </location>
</feature>
<feature type="binding site" evidence="1">
    <location>
        <position position="14"/>
    </location>
    <ligand>
        <name>ADP</name>
        <dbReference type="ChEBI" id="CHEBI:456216"/>
    </ligand>
</feature>
<feature type="binding site" evidence="1">
    <location>
        <position position="14"/>
    </location>
    <ligand>
        <name>ATP</name>
        <dbReference type="ChEBI" id="CHEBI:30616"/>
    </ligand>
</feature>
<feature type="binding site" evidence="1">
    <location>
        <position position="14"/>
    </location>
    <ligand>
        <name>sn-glycerol 3-phosphate</name>
        <dbReference type="ChEBI" id="CHEBI:57597"/>
    </ligand>
</feature>
<feature type="binding site" evidence="1">
    <location>
        <position position="15"/>
    </location>
    <ligand>
        <name>ATP</name>
        <dbReference type="ChEBI" id="CHEBI:30616"/>
    </ligand>
</feature>
<feature type="binding site" evidence="1">
    <location>
        <position position="16"/>
    </location>
    <ligand>
        <name>ATP</name>
        <dbReference type="ChEBI" id="CHEBI:30616"/>
    </ligand>
</feature>
<feature type="binding site" evidence="1">
    <location>
        <position position="18"/>
    </location>
    <ligand>
        <name>ADP</name>
        <dbReference type="ChEBI" id="CHEBI:456216"/>
    </ligand>
</feature>
<feature type="binding site" evidence="1">
    <location>
        <position position="84"/>
    </location>
    <ligand>
        <name>glycerol</name>
        <dbReference type="ChEBI" id="CHEBI:17754"/>
    </ligand>
</feature>
<feature type="binding site" evidence="1">
    <location>
        <position position="84"/>
    </location>
    <ligand>
        <name>sn-glycerol 3-phosphate</name>
        <dbReference type="ChEBI" id="CHEBI:57597"/>
    </ligand>
</feature>
<feature type="binding site" evidence="1">
    <location>
        <position position="85"/>
    </location>
    <ligand>
        <name>glycerol</name>
        <dbReference type="ChEBI" id="CHEBI:17754"/>
    </ligand>
</feature>
<feature type="binding site" evidence="1">
    <location>
        <position position="85"/>
    </location>
    <ligand>
        <name>sn-glycerol 3-phosphate</name>
        <dbReference type="ChEBI" id="CHEBI:57597"/>
    </ligand>
</feature>
<feature type="binding site" evidence="1">
    <location>
        <position position="136"/>
    </location>
    <ligand>
        <name>glycerol</name>
        <dbReference type="ChEBI" id="CHEBI:17754"/>
    </ligand>
</feature>
<feature type="binding site" evidence="1">
    <location>
        <position position="136"/>
    </location>
    <ligand>
        <name>sn-glycerol 3-phosphate</name>
        <dbReference type="ChEBI" id="CHEBI:57597"/>
    </ligand>
</feature>
<feature type="binding site" evidence="1">
    <location>
        <position position="246"/>
    </location>
    <ligand>
        <name>glycerol</name>
        <dbReference type="ChEBI" id="CHEBI:17754"/>
    </ligand>
</feature>
<feature type="binding site" evidence="1">
    <location>
        <position position="246"/>
    </location>
    <ligand>
        <name>sn-glycerol 3-phosphate</name>
        <dbReference type="ChEBI" id="CHEBI:57597"/>
    </ligand>
</feature>
<feature type="binding site" evidence="1">
    <location>
        <position position="247"/>
    </location>
    <ligand>
        <name>glycerol</name>
        <dbReference type="ChEBI" id="CHEBI:17754"/>
    </ligand>
</feature>
<feature type="binding site" evidence="1">
    <location>
        <position position="268"/>
    </location>
    <ligand>
        <name>ADP</name>
        <dbReference type="ChEBI" id="CHEBI:456216"/>
    </ligand>
</feature>
<feature type="binding site" evidence="1">
    <location>
        <position position="268"/>
    </location>
    <ligand>
        <name>ATP</name>
        <dbReference type="ChEBI" id="CHEBI:30616"/>
    </ligand>
</feature>
<feature type="binding site" evidence="1">
    <location>
        <position position="311"/>
    </location>
    <ligand>
        <name>ADP</name>
        <dbReference type="ChEBI" id="CHEBI:456216"/>
    </ligand>
</feature>
<feature type="binding site" evidence="1">
    <location>
        <position position="311"/>
    </location>
    <ligand>
        <name>ATP</name>
        <dbReference type="ChEBI" id="CHEBI:30616"/>
    </ligand>
</feature>
<feature type="binding site" evidence="1">
    <location>
        <position position="315"/>
    </location>
    <ligand>
        <name>ATP</name>
        <dbReference type="ChEBI" id="CHEBI:30616"/>
    </ligand>
</feature>
<feature type="binding site" evidence="1">
    <location>
        <position position="412"/>
    </location>
    <ligand>
        <name>ADP</name>
        <dbReference type="ChEBI" id="CHEBI:456216"/>
    </ligand>
</feature>
<feature type="binding site" evidence="1">
    <location>
        <position position="412"/>
    </location>
    <ligand>
        <name>ATP</name>
        <dbReference type="ChEBI" id="CHEBI:30616"/>
    </ligand>
</feature>
<feature type="binding site" evidence="1">
    <location>
        <position position="416"/>
    </location>
    <ligand>
        <name>ADP</name>
        <dbReference type="ChEBI" id="CHEBI:456216"/>
    </ligand>
</feature>
<feature type="modified residue" description="Phosphohistidine; by HPr" evidence="1">
    <location>
        <position position="232"/>
    </location>
</feature>
<evidence type="ECO:0000255" key="1">
    <source>
        <dbReference type="HAMAP-Rule" id="MF_00186"/>
    </source>
</evidence>
<reference key="1">
    <citation type="journal article" date="2005" name="J. Infect. Dis.">
        <title>Genome sequence of a serotype M28 strain of group A Streptococcus: potential new insights into puerperal sepsis and bacterial disease specificity.</title>
        <authorList>
            <person name="Green N.M."/>
            <person name="Zhang S."/>
            <person name="Porcella S.F."/>
            <person name="Nagiec M.J."/>
            <person name="Barbian K.D."/>
            <person name="Beres S.B."/>
            <person name="Lefebvre R.B."/>
            <person name="Musser J.M."/>
        </authorList>
    </citation>
    <scope>NUCLEOTIDE SEQUENCE [LARGE SCALE GENOMIC DNA]</scope>
    <source>
        <strain>MGAS6180</strain>
    </source>
</reference>
<dbReference type="EC" id="2.7.1.30" evidence="1"/>
<dbReference type="EMBL" id="CP000056">
    <property type="protein sequence ID" value="AAX72534.1"/>
    <property type="molecule type" value="Genomic_DNA"/>
</dbReference>
<dbReference type="RefSeq" id="WP_011285068.1">
    <property type="nucleotide sequence ID" value="NC_007296.2"/>
</dbReference>
<dbReference type="SMR" id="Q48RX6"/>
<dbReference type="KEGG" id="spb:M28_Spy1424"/>
<dbReference type="HOGENOM" id="CLU_009281_2_3_9"/>
<dbReference type="UniPathway" id="UPA00618">
    <property type="reaction ID" value="UER00672"/>
</dbReference>
<dbReference type="GO" id="GO:0005829">
    <property type="term" value="C:cytosol"/>
    <property type="evidence" value="ECO:0007669"/>
    <property type="project" value="TreeGrafter"/>
</dbReference>
<dbReference type="GO" id="GO:0005524">
    <property type="term" value="F:ATP binding"/>
    <property type="evidence" value="ECO:0007669"/>
    <property type="project" value="UniProtKB-UniRule"/>
</dbReference>
<dbReference type="GO" id="GO:0004370">
    <property type="term" value="F:glycerol kinase activity"/>
    <property type="evidence" value="ECO:0000250"/>
    <property type="project" value="UniProtKB"/>
</dbReference>
<dbReference type="GO" id="GO:0019563">
    <property type="term" value="P:glycerol catabolic process"/>
    <property type="evidence" value="ECO:0007669"/>
    <property type="project" value="UniProtKB-UniRule"/>
</dbReference>
<dbReference type="GO" id="GO:0006071">
    <property type="term" value="P:glycerol metabolic process"/>
    <property type="evidence" value="ECO:0000250"/>
    <property type="project" value="UniProtKB"/>
</dbReference>
<dbReference type="GO" id="GO:0006072">
    <property type="term" value="P:glycerol-3-phosphate metabolic process"/>
    <property type="evidence" value="ECO:0007669"/>
    <property type="project" value="InterPro"/>
</dbReference>
<dbReference type="CDD" id="cd07786">
    <property type="entry name" value="FGGY_EcGK_like"/>
    <property type="match status" value="1"/>
</dbReference>
<dbReference type="FunFam" id="3.30.420.40:FF:000007">
    <property type="entry name" value="Glycerol kinase"/>
    <property type="match status" value="1"/>
</dbReference>
<dbReference type="FunFam" id="3.30.420.40:FF:000008">
    <property type="entry name" value="Glycerol kinase"/>
    <property type="match status" value="1"/>
</dbReference>
<dbReference type="Gene3D" id="3.30.420.40">
    <property type="match status" value="2"/>
</dbReference>
<dbReference type="HAMAP" id="MF_00186">
    <property type="entry name" value="Glycerol_kin"/>
    <property type="match status" value="1"/>
</dbReference>
<dbReference type="InterPro" id="IPR043129">
    <property type="entry name" value="ATPase_NBD"/>
</dbReference>
<dbReference type="InterPro" id="IPR000577">
    <property type="entry name" value="Carb_kinase_FGGY"/>
</dbReference>
<dbReference type="InterPro" id="IPR018483">
    <property type="entry name" value="Carb_kinase_FGGY_CS"/>
</dbReference>
<dbReference type="InterPro" id="IPR018485">
    <property type="entry name" value="FGGY_C"/>
</dbReference>
<dbReference type="InterPro" id="IPR018484">
    <property type="entry name" value="FGGY_N"/>
</dbReference>
<dbReference type="InterPro" id="IPR005999">
    <property type="entry name" value="Glycerol_kin"/>
</dbReference>
<dbReference type="NCBIfam" id="TIGR01311">
    <property type="entry name" value="glycerol_kin"/>
    <property type="match status" value="1"/>
</dbReference>
<dbReference type="NCBIfam" id="NF000756">
    <property type="entry name" value="PRK00047.1"/>
    <property type="match status" value="1"/>
</dbReference>
<dbReference type="PANTHER" id="PTHR10196:SF69">
    <property type="entry name" value="GLYCEROL KINASE"/>
    <property type="match status" value="1"/>
</dbReference>
<dbReference type="PANTHER" id="PTHR10196">
    <property type="entry name" value="SUGAR KINASE"/>
    <property type="match status" value="1"/>
</dbReference>
<dbReference type="Pfam" id="PF02782">
    <property type="entry name" value="FGGY_C"/>
    <property type="match status" value="1"/>
</dbReference>
<dbReference type="Pfam" id="PF00370">
    <property type="entry name" value="FGGY_N"/>
    <property type="match status" value="1"/>
</dbReference>
<dbReference type="PIRSF" id="PIRSF000538">
    <property type="entry name" value="GlpK"/>
    <property type="match status" value="1"/>
</dbReference>
<dbReference type="SUPFAM" id="SSF53067">
    <property type="entry name" value="Actin-like ATPase domain"/>
    <property type="match status" value="2"/>
</dbReference>
<dbReference type="PROSITE" id="PS00933">
    <property type="entry name" value="FGGY_KINASES_1"/>
    <property type="match status" value="1"/>
</dbReference>
<dbReference type="PROSITE" id="PS00445">
    <property type="entry name" value="FGGY_KINASES_2"/>
    <property type="match status" value="1"/>
</dbReference>
<sequence>MSQEKYIMAIDQGTTSSRAIIFNQKGEKVSSSQKEFPQIFPHAGWVEHNANQIWNSVQSVIAGAFIESSIKPSQIEAIGITNQRETTVVWDKKTGVPIYNAIVWQSRQTAPIAEQLKQDGHTKMIHEKTGLVIDAYFSATKIRWILDHVPGAQERAEKGELLFGTIDTWLVWKLTDGAVHVTDYSNAARTMLYNIKDLTWDDEILELLNIPKDMLPEVKSNSEIYGKTAAFHFYGGEVPISGMAGDQQAALFGQLAFEPGMVKNTYGTGSFIIMNTGDEMQLSSNNLLTTIGYGINGKVHYALEGSIFIAGSAIQWLRDGLKMIETSPESEQLALASTSDDEVYVVPAFTGLGTPYWDSNARGSVFGLTRGTSKEDFVKATLQSIAYQVRDVIDTMQVDSGIDIQQLRVDGGAAMNNMLMQFQADILGIDIARAKNLETTALGAAFLAGLAVGYWEDMDALKELNATGQLFKASMNESRKEKLYKGWKRAVKATQVFTQEEDADDDAK</sequence>
<proteinExistence type="inferred from homology"/>
<name>GLPK_STRPM</name>
<accession>Q48RX6</accession>